<proteinExistence type="inferred from homology"/>
<reference key="1">
    <citation type="journal article" date="2011" name="J. Bacteriol.">
        <title>Comparative genomics of 28 Salmonella enterica isolates: evidence for CRISPR-mediated adaptive sublineage evolution.</title>
        <authorList>
            <person name="Fricke W.F."/>
            <person name="Mammel M.K."/>
            <person name="McDermott P.F."/>
            <person name="Tartera C."/>
            <person name="White D.G."/>
            <person name="Leclerc J.E."/>
            <person name="Ravel J."/>
            <person name="Cebula T.A."/>
        </authorList>
    </citation>
    <scope>NUCLEOTIDE SEQUENCE [LARGE SCALE GENOMIC DNA]</scope>
    <source>
        <strain>SL254</strain>
    </source>
</reference>
<sequence>MSEFVTVARPYAKAAFDFAVEHQSVERWQDMLAFAAEVTKNEQMAELLSGALAPETLAESFIAVCGEQLDENGQNLIRVMAENNRLNALPDVLEQFIHLRAASEATSEVEVTSATALSEEQLSKISAAMEKRLSRKVKLNCKIDKSVMAGVIIRAGDMVIDGSVRGRLERLADVLQS</sequence>
<evidence type="ECO:0000255" key="1">
    <source>
        <dbReference type="HAMAP-Rule" id="MF_01416"/>
    </source>
</evidence>
<accession>B4SYD4</accession>
<feature type="chain" id="PRO_0000371118" description="ATP synthase subunit delta">
    <location>
        <begin position="1"/>
        <end position="177"/>
    </location>
</feature>
<keyword id="KW-0066">ATP synthesis</keyword>
<keyword id="KW-0997">Cell inner membrane</keyword>
<keyword id="KW-1003">Cell membrane</keyword>
<keyword id="KW-0139">CF(1)</keyword>
<keyword id="KW-0375">Hydrogen ion transport</keyword>
<keyword id="KW-0406">Ion transport</keyword>
<keyword id="KW-0472">Membrane</keyword>
<keyword id="KW-0813">Transport</keyword>
<gene>
    <name evidence="1" type="primary">atpH</name>
    <name type="ordered locus">SNSL254_A4149</name>
</gene>
<name>ATPD_SALNS</name>
<comment type="function">
    <text evidence="1">F(1)F(0) ATP synthase produces ATP from ADP in the presence of a proton or sodium gradient. F-type ATPases consist of two structural domains, F(1) containing the extramembraneous catalytic core and F(0) containing the membrane proton channel, linked together by a central stalk and a peripheral stalk. During catalysis, ATP synthesis in the catalytic domain of F(1) is coupled via a rotary mechanism of the central stalk subunits to proton translocation.</text>
</comment>
<comment type="function">
    <text evidence="1">This protein is part of the stalk that links CF(0) to CF(1). It either transmits conformational changes from CF(0) to CF(1) or is implicated in proton conduction.</text>
</comment>
<comment type="subunit">
    <text evidence="1">F-type ATPases have 2 components, F(1) - the catalytic core - and F(0) - the membrane proton channel. F(1) has five subunits: alpha(3), beta(3), gamma(1), delta(1), epsilon(1). F(0) has three main subunits: a(1), b(2) and c(10-14). The alpha and beta chains form an alternating ring which encloses part of the gamma chain. F(1) is attached to F(0) by a central stalk formed by the gamma and epsilon chains, while a peripheral stalk is formed by the delta and b chains.</text>
</comment>
<comment type="subcellular location">
    <subcellularLocation>
        <location evidence="1">Cell inner membrane</location>
        <topology evidence="1">Peripheral membrane protein</topology>
    </subcellularLocation>
</comment>
<comment type="similarity">
    <text evidence="1">Belongs to the ATPase delta chain family.</text>
</comment>
<protein>
    <recommendedName>
        <fullName evidence="1">ATP synthase subunit delta</fullName>
    </recommendedName>
    <alternativeName>
        <fullName evidence="1">ATP synthase F(1) sector subunit delta</fullName>
    </alternativeName>
    <alternativeName>
        <fullName evidence="1">F-type ATPase subunit delta</fullName>
        <shortName evidence="1">F-ATPase subunit delta</shortName>
    </alternativeName>
</protein>
<organism>
    <name type="scientific">Salmonella newport (strain SL254)</name>
    <dbReference type="NCBI Taxonomy" id="423368"/>
    <lineage>
        <taxon>Bacteria</taxon>
        <taxon>Pseudomonadati</taxon>
        <taxon>Pseudomonadota</taxon>
        <taxon>Gammaproteobacteria</taxon>
        <taxon>Enterobacterales</taxon>
        <taxon>Enterobacteriaceae</taxon>
        <taxon>Salmonella</taxon>
    </lineage>
</organism>
<dbReference type="EMBL" id="CP001113">
    <property type="protein sequence ID" value="ACF64372.1"/>
    <property type="molecule type" value="Genomic_DNA"/>
</dbReference>
<dbReference type="RefSeq" id="WP_001288957.1">
    <property type="nucleotide sequence ID" value="NZ_CCMR01000001.1"/>
</dbReference>
<dbReference type="SMR" id="B4SYD4"/>
<dbReference type="KEGG" id="see:SNSL254_A4149"/>
<dbReference type="HOGENOM" id="CLU_085114_3_0_6"/>
<dbReference type="Proteomes" id="UP000008824">
    <property type="component" value="Chromosome"/>
</dbReference>
<dbReference type="GO" id="GO:0005886">
    <property type="term" value="C:plasma membrane"/>
    <property type="evidence" value="ECO:0007669"/>
    <property type="project" value="UniProtKB-SubCell"/>
</dbReference>
<dbReference type="GO" id="GO:0045259">
    <property type="term" value="C:proton-transporting ATP synthase complex"/>
    <property type="evidence" value="ECO:0007669"/>
    <property type="project" value="UniProtKB-KW"/>
</dbReference>
<dbReference type="GO" id="GO:0046933">
    <property type="term" value="F:proton-transporting ATP synthase activity, rotational mechanism"/>
    <property type="evidence" value="ECO:0007669"/>
    <property type="project" value="UniProtKB-UniRule"/>
</dbReference>
<dbReference type="FunFam" id="1.10.520.20:FF:000001">
    <property type="entry name" value="ATP synthase subunit delta"/>
    <property type="match status" value="1"/>
</dbReference>
<dbReference type="Gene3D" id="1.10.520.20">
    <property type="entry name" value="N-terminal domain of the delta subunit of the F1F0-ATP synthase"/>
    <property type="match status" value="1"/>
</dbReference>
<dbReference type="HAMAP" id="MF_01416">
    <property type="entry name" value="ATP_synth_delta_bact"/>
    <property type="match status" value="1"/>
</dbReference>
<dbReference type="InterPro" id="IPR026015">
    <property type="entry name" value="ATP_synth_OSCP/delta_N_sf"/>
</dbReference>
<dbReference type="InterPro" id="IPR020781">
    <property type="entry name" value="ATPase_OSCP/d_CS"/>
</dbReference>
<dbReference type="InterPro" id="IPR000711">
    <property type="entry name" value="ATPase_OSCP/dsu"/>
</dbReference>
<dbReference type="NCBIfam" id="TIGR01145">
    <property type="entry name" value="ATP_synt_delta"/>
    <property type="match status" value="1"/>
</dbReference>
<dbReference type="NCBIfam" id="NF004402">
    <property type="entry name" value="PRK05758.2-2"/>
    <property type="match status" value="1"/>
</dbReference>
<dbReference type="NCBIfam" id="NF004404">
    <property type="entry name" value="PRK05758.2-5"/>
    <property type="match status" value="1"/>
</dbReference>
<dbReference type="PANTHER" id="PTHR11910">
    <property type="entry name" value="ATP SYNTHASE DELTA CHAIN"/>
    <property type="match status" value="1"/>
</dbReference>
<dbReference type="Pfam" id="PF00213">
    <property type="entry name" value="OSCP"/>
    <property type="match status" value="1"/>
</dbReference>
<dbReference type="PRINTS" id="PR00125">
    <property type="entry name" value="ATPASEDELTA"/>
</dbReference>
<dbReference type="SUPFAM" id="SSF47928">
    <property type="entry name" value="N-terminal domain of the delta subunit of the F1F0-ATP synthase"/>
    <property type="match status" value="1"/>
</dbReference>
<dbReference type="PROSITE" id="PS00389">
    <property type="entry name" value="ATPASE_DELTA"/>
    <property type="match status" value="1"/>
</dbReference>